<reference key="1">
    <citation type="journal article" date="1997" name="Nature">
        <title>Molecular basis of symbiosis between Rhizobium and legumes.</title>
        <authorList>
            <person name="Freiberg C.A."/>
            <person name="Fellay R."/>
            <person name="Bairoch A."/>
            <person name="Broughton W.J."/>
            <person name="Rosenthal A."/>
            <person name="Perret X."/>
        </authorList>
    </citation>
    <scope>NUCLEOTIDE SEQUENCE [LARGE SCALE GENOMIC DNA]</scope>
    <source>
        <strain>NBRC 101917 / NGR234</strain>
    </source>
</reference>
<reference key="2">
    <citation type="journal article" date="2009" name="Appl. Environ. Microbiol.">
        <title>Rhizobium sp. strain NGR234 possesses a remarkable number of secretion systems.</title>
        <authorList>
            <person name="Schmeisser C."/>
            <person name="Liesegang H."/>
            <person name="Krysciak D."/>
            <person name="Bakkou N."/>
            <person name="Le Quere A."/>
            <person name="Wollherr A."/>
            <person name="Heinemeyer I."/>
            <person name="Morgenstern B."/>
            <person name="Pommerening-Roeser A."/>
            <person name="Flores M."/>
            <person name="Palacios R."/>
            <person name="Brenner S."/>
            <person name="Gottschalk G."/>
            <person name="Schmitz R.A."/>
            <person name="Broughton W.J."/>
            <person name="Perret X."/>
            <person name="Strittmatter A.W."/>
            <person name="Streit W.R."/>
        </authorList>
    </citation>
    <scope>NUCLEOTIDE SEQUENCE [LARGE SCALE GENOMIC DNA]</scope>
    <source>
        <strain>NBRC 101917 / NGR234</strain>
    </source>
</reference>
<evidence type="ECO:0000250" key="1"/>
<evidence type="ECO:0000255" key="2">
    <source>
        <dbReference type="PROSITE-ProRule" id="PRU01398"/>
    </source>
</evidence>
<evidence type="ECO:0000256" key="3">
    <source>
        <dbReference type="SAM" id="MobiDB-lite"/>
    </source>
</evidence>
<evidence type="ECO:0000305" key="4"/>
<gene>
    <name type="ordered locus">NGR_a03640</name>
    <name type="ORF">y4fR</name>
</gene>
<protein>
    <recommendedName>
        <fullName>Probable E3 ubiquitin-protein ligase NGR_a03640</fullName>
        <ecNumber>2.3.2.-</ecNumber>
    </recommendedName>
    <alternativeName>
        <fullName evidence="4">Probable E3 ubiquitin-protein transferase NGR_a03640</fullName>
    </alternativeName>
</protein>
<sequence>MNVQRPGLAVGPLFENPESESSEPGSPAAAARWVEASTEAEASAASSSQGQIVAAPTAEERPWEGRPQEAVSRTRAWREAGDVDEPLDLSFLSLTPLSIPLVSGLRRLNVNNNQLGDLPDTLPGTLLELEASENRLTRLPDLPAGLQRLNVENNRLTNLPEPLPAALEWLGAGYNQLTRLPEMIPPELIWLGARNNQLTSVPESLLTQLGQWSSIDLENNPLPHGVQTNLVTAMHAAGYAGPQIFLPMGPVELARRPLHEVVADWLEGDLETVAAWRGFANEQGARDYAHFLDRLRTTVNYGNDAFRQAVAIGLRQAVARPQLRAQYFEQASGASDSCEDRITLTWNGMQTALLIADVEDGVYDGSLHQLLQHGRVMFRLEALDGIARETVNSLRRTDPDADIDEIEVYLAYQTQLRDTLELRHVAPDMRFLNVSHVTEEDVARAASSVRELEARGFGEYVATRWQPWERVMRRIAPASHAAMQEQLIEAMGEEFRSRLDEKLAEHGLTGDADAERVFGAEILNDIARRIKGETMEKVLRGRGLEL</sequence>
<organism>
    <name type="scientific">Sinorhizobium fredii (strain NBRC 101917 / NGR234)</name>
    <dbReference type="NCBI Taxonomy" id="394"/>
    <lineage>
        <taxon>Bacteria</taxon>
        <taxon>Pseudomonadati</taxon>
        <taxon>Pseudomonadota</taxon>
        <taxon>Alphaproteobacteria</taxon>
        <taxon>Hyphomicrobiales</taxon>
        <taxon>Rhizobiaceae</taxon>
        <taxon>Sinorhizobium/Ensifer group</taxon>
        <taxon>Sinorhizobium</taxon>
    </lineage>
</organism>
<keyword id="KW-1035">Host cytoplasm</keyword>
<keyword id="KW-0433">Leucine-rich repeat</keyword>
<keyword id="KW-0614">Plasmid</keyword>
<keyword id="KW-1185">Reference proteome</keyword>
<keyword id="KW-0677">Repeat</keyword>
<keyword id="KW-0964">Secreted</keyword>
<keyword id="KW-0808">Transferase</keyword>
<keyword id="KW-0832">Ubl conjugation</keyword>
<keyword id="KW-0833">Ubl conjugation pathway</keyword>
<comment type="function">
    <text evidence="1">Effector proteins function to alter host cell physiology and promote bacterial survival in host tissues. This protein is an E3 ubiquitin ligase that interferes with host's ubiquitination pathway (By similarity).</text>
</comment>
<comment type="subcellular location">
    <subcellularLocation>
        <location evidence="1">Secreted</location>
    </subcellularLocation>
    <subcellularLocation>
        <location evidence="1">Host cytoplasm</location>
    </subcellularLocation>
    <text evidence="1">Secreted via type III secretion system (T3SS), and delivered into the host cytoplasm.</text>
</comment>
<comment type="domain">
    <text evidence="1">The LRR (leucine-rich repeat) domain forms a slightly curved solenoid and may mediate interaction with target proteins.</text>
</comment>
<comment type="PTM">
    <text evidence="1">Ubiquitinated in the presence of host E1 ubiquitin-activating enzyme, E2 ubiquitin-conjugating enzyme and ubiquitin.</text>
</comment>
<comment type="similarity">
    <text evidence="2 4">Belongs to the LRR-containing bacterial E3 ligase family.</text>
</comment>
<geneLocation type="plasmid">
    <name>sym pNGR234a</name>
</geneLocation>
<proteinExistence type="inferred from homology"/>
<dbReference type="EC" id="2.3.2.-"/>
<dbReference type="EMBL" id="U00090">
    <property type="protein sequence ID" value="AAB91674.1"/>
    <property type="molecule type" value="Genomic_DNA"/>
</dbReference>
<dbReference type="RefSeq" id="NP_443862.1">
    <property type="nucleotide sequence ID" value="NC_000914.2"/>
</dbReference>
<dbReference type="RefSeq" id="WP_010875377.1">
    <property type="nucleotide sequence ID" value="NC_000914.2"/>
</dbReference>
<dbReference type="SMR" id="P55456"/>
<dbReference type="iPTMnet" id="P55456"/>
<dbReference type="KEGG" id="rhi:NGR_a03640"/>
<dbReference type="PATRIC" id="fig|394.7.peg.371"/>
<dbReference type="eggNOG" id="COG4886">
    <property type="taxonomic scope" value="Bacteria"/>
</dbReference>
<dbReference type="HOGENOM" id="CLU_018533_2_0_5"/>
<dbReference type="OrthoDB" id="8334314at2"/>
<dbReference type="Proteomes" id="UP000001054">
    <property type="component" value="Plasmid pNGR234a"/>
</dbReference>
<dbReference type="GO" id="GO:0005576">
    <property type="term" value="C:extracellular region"/>
    <property type="evidence" value="ECO:0007669"/>
    <property type="project" value="UniProtKB-SubCell"/>
</dbReference>
<dbReference type="GO" id="GO:0030430">
    <property type="term" value="C:host cell cytoplasm"/>
    <property type="evidence" value="ECO:0007669"/>
    <property type="project" value="UniProtKB-SubCell"/>
</dbReference>
<dbReference type="GO" id="GO:0004842">
    <property type="term" value="F:ubiquitin-protein transferase activity"/>
    <property type="evidence" value="ECO:0007669"/>
    <property type="project" value="InterPro"/>
</dbReference>
<dbReference type="GO" id="GO:0016567">
    <property type="term" value="P:protein ubiquitination"/>
    <property type="evidence" value="ECO:0007669"/>
    <property type="project" value="InterPro"/>
</dbReference>
<dbReference type="Gene3D" id="1.20.58.90">
    <property type="match status" value="1"/>
</dbReference>
<dbReference type="Gene3D" id="3.80.10.10">
    <property type="entry name" value="Ribonuclease Inhibitor"/>
    <property type="match status" value="1"/>
</dbReference>
<dbReference type="Gene3D" id="1.20.58.360">
    <property type="entry name" value="Shigella T3SS effector IpaH defines"/>
    <property type="match status" value="1"/>
</dbReference>
<dbReference type="Gene3D" id="1.20.1270.130">
    <property type="entry name" value="Shigella T3SS effector IpaH domain"/>
    <property type="match status" value="1"/>
</dbReference>
<dbReference type="InterPro" id="IPR051071">
    <property type="entry name" value="LRR-bact_E3_ubiq_ligases"/>
</dbReference>
<dbReference type="InterPro" id="IPR032675">
    <property type="entry name" value="LRR_dom_sf"/>
</dbReference>
<dbReference type="InterPro" id="IPR029487">
    <property type="entry name" value="NEL_dom"/>
</dbReference>
<dbReference type="PANTHER" id="PTHR47114">
    <property type="match status" value="1"/>
</dbReference>
<dbReference type="PANTHER" id="PTHR47114:SF2">
    <property type="entry name" value="OLIGODENDROCYTE-MYELIN GLYCOPROTEIN"/>
    <property type="match status" value="1"/>
</dbReference>
<dbReference type="Pfam" id="PF14496">
    <property type="entry name" value="NEL"/>
    <property type="match status" value="1"/>
</dbReference>
<dbReference type="SMART" id="SM00364">
    <property type="entry name" value="LRR_BAC"/>
    <property type="match status" value="5"/>
</dbReference>
<dbReference type="SUPFAM" id="SSF52058">
    <property type="entry name" value="L domain-like"/>
    <property type="match status" value="1"/>
</dbReference>
<dbReference type="PROSITE" id="PS52053">
    <property type="entry name" value="NEL"/>
    <property type="match status" value="1"/>
</dbReference>
<name>Y4FR_SINFN</name>
<accession>P55456</accession>
<feature type="chain" id="PRO_0000200841" description="Probable E3 ubiquitin-protein ligase NGR_a03640">
    <location>
        <begin position="1"/>
        <end position="546"/>
    </location>
</feature>
<feature type="repeat" description="LRR 1">
    <location>
        <begin position="104"/>
        <end position="125"/>
    </location>
</feature>
<feature type="repeat" description="LRR 2">
    <location>
        <begin position="126"/>
        <end position="144"/>
    </location>
</feature>
<feature type="repeat" description="LRR 3">
    <location>
        <begin position="145"/>
        <end position="166"/>
    </location>
</feature>
<feature type="repeat" description="LRR 4">
    <location>
        <begin position="167"/>
        <end position="186"/>
    </location>
</feature>
<feature type="repeat" description="LRR 5">
    <location>
        <begin position="187"/>
        <end position="208"/>
    </location>
</feature>
<feature type="domain" description="NEL" evidence="2">
    <location>
        <begin position="257"/>
        <end position="546"/>
    </location>
</feature>
<feature type="region of interest" description="Interaction with target proteins" evidence="1">
    <location>
        <begin position="1"/>
        <end position="248"/>
    </location>
</feature>
<feature type="region of interest" description="Disordered" evidence="3">
    <location>
        <begin position="1"/>
        <end position="70"/>
    </location>
</feature>
<feature type="region of interest" description="Linker" evidence="1">
    <location>
        <begin position="249"/>
        <end position="256"/>
    </location>
</feature>
<feature type="region of interest" description="E3 ubiquitin-protein ligase catalytic domain" evidence="1">
    <location>
        <begin position="257"/>
        <end position="546"/>
    </location>
</feature>
<feature type="compositionally biased region" description="Low complexity" evidence="3">
    <location>
        <begin position="22"/>
        <end position="48"/>
    </location>
</feature>
<feature type="compositionally biased region" description="Basic and acidic residues" evidence="3">
    <location>
        <begin position="58"/>
        <end position="67"/>
    </location>
</feature>
<feature type="active site" description="Glycyl thioester intermediate" evidence="2">
    <location>
        <position position="338"/>
    </location>
</feature>